<proteinExistence type="evidence at transcript level"/>
<sequence length="197" mass="20903">MENLKATELRLGLPGTEEEAAPPPSTPRAGSKRALAGEPDQAKIKPAAAAKAQVVGWPPVRSYRKSCLQPTTTTTKSKPPPAAAAAETQQKEDVAGAGGLFVKVSMDGAPYLRKIDLKVYKGYRELREALEAMFLCFSGGAAADAAVNPSDFAVTYEDKDGDLMLVGDVPFEMFISTCKRLRIMKGSEARGLGATRG</sequence>
<keyword id="KW-0927">Auxin signaling pathway</keyword>
<keyword id="KW-0539">Nucleus</keyword>
<keyword id="KW-1185">Reference proteome</keyword>
<keyword id="KW-0678">Repressor</keyword>
<keyword id="KW-0804">Transcription</keyword>
<keyword id="KW-0805">Transcription regulation</keyword>
<accession>P0C133</accession>
<accession>A0A0P0YCE2</accession>
<accession>Q2QMK0</accession>
<comment type="function">
    <text evidence="1">Aux/IAA proteins are short-lived transcriptional factors that function as repressors of early auxin response genes at low auxin concentrations.</text>
</comment>
<comment type="subunit">
    <text evidence="1">Homodimers and heterodimers.</text>
</comment>
<comment type="subcellular location">
    <subcellularLocation>
        <location evidence="1">Nucleus</location>
    </subcellularLocation>
</comment>
<comment type="tissue specificity">
    <text evidence="4">Highly expressed in etiolated seedlings. Expressed in roots.</text>
</comment>
<comment type="induction">
    <text evidence="4">By auxin.</text>
</comment>
<comment type="similarity">
    <text evidence="5">Belongs to the Aux/IAA family.</text>
</comment>
<protein>
    <recommendedName>
        <fullName>Auxin-responsive protein IAA31</fullName>
    </recommendedName>
    <alternativeName>
        <fullName>Indoleacetic acid-induced protein 31</fullName>
    </alternativeName>
</protein>
<name>IAA31_ORYSJ</name>
<feature type="chain" id="PRO_0000223230" description="Auxin-responsive protein IAA31">
    <location>
        <begin position="1"/>
        <end position="197"/>
    </location>
</feature>
<feature type="domain" description="PB1" evidence="2">
    <location>
        <begin position="99"/>
        <end position="186"/>
    </location>
</feature>
<feature type="region of interest" description="Disordered" evidence="3">
    <location>
        <begin position="1"/>
        <end position="43"/>
    </location>
</feature>
<feature type="region of interest" description="Disordered" evidence="3">
    <location>
        <begin position="66"/>
        <end position="90"/>
    </location>
</feature>
<feature type="short sequence motif" description="EAR-like (transcriptional repression)" evidence="1">
    <location>
        <begin position="9"/>
        <end position="13"/>
    </location>
</feature>
<evidence type="ECO:0000250" key="1"/>
<evidence type="ECO:0000255" key="2">
    <source>
        <dbReference type="PROSITE-ProRule" id="PRU01081"/>
    </source>
</evidence>
<evidence type="ECO:0000256" key="3">
    <source>
        <dbReference type="SAM" id="MobiDB-lite"/>
    </source>
</evidence>
<evidence type="ECO:0000269" key="4">
    <source>
    </source>
</evidence>
<evidence type="ECO:0000305" key="5"/>
<organism>
    <name type="scientific">Oryza sativa subsp. japonica</name>
    <name type="common">Rice</name>
    <dbReference type="NCBI Taxonomy" id="39947"/>
    <lineage>
        <taxon>Eukaryota</taxon>
        <taxon>Viridiplantae</taxon>
        <taxon>Streptophyta</taxon>
        <taxon>Embryophyta</taxon>
        <taxon>Tracheophyta</taxon>
        <taxon>Spermatophyta</taxon>
        <taxon>Magnoliopsida</taxon>
        <taxon>Liliopsida</taxon>
        <taxon>Poales</taxon>
        <taxon>Poaceae</taxon>
        <taxon>BOP clade</taxon>
        <taxon>Oryzoideae</taxon>
        <taxon>Oryzeae</taxon>
        <taxon>Oryzinae</taxon>
        <taxon>Oryza</taxon>
        <taxon>Oryza sativa</taxon>
    </lineage>
</organism>
<dbReference type="EMBL" id="DP000011">
    <property type="protein sequence ID" value="ABA99794.1"/>
    <property type="molecule type" value="Genomic_DNA"/>
</dbReference>
<dbReference type="EMBL" id="AP008218">
    <property type="protein sequence ID" value="BAF30229.1"/>
    <property type="molecule type" value="Genomic_DNA"/>
</dbReference>
<dbReference type="EMBL" id="AP014968">
    <property type="protein sequence ID" value="BAT17960.1"/>
    <property type="molecule type" value="Genomic_DNA"/>
</dbReference>
<dbReference type="EMBL" id="CM000149">
    <property type="protein sequence ID" value="EAZ21123.1"/>
    <property type="molecule type" value="Genomic_DNA"/>
</dbReference>
<dbReference type="EMBL" id="AK073361">
    <property type="protein sequence ID" value="BAG93416.1"/>
    <property type="molecule type" value="mRNA"/>
</dbReference>
<dbReference type="RefSeq" id="XP_015618566.1">
    <property type="nucleotide sequence ID" value="XM_015763080.1"/>
</dbReference>
<dbReference type="SMR" id="P0C133"/>
<dbReference type="FunCoup" id="P0C133">
    <property type="interactions" value="1359"/>
</dbReference>
<dbReference type="STRING" id="39947.P0C133"/>
<dbReference type="PaxDb" id="39947-P0C133"/>
<dbReference type="EnsemblPlants" id="Os12t0601400-01">
    <property type="protein sequence ID" value="Os12t0601400-01"/>
    <property type="gene ID" value="Os12g0601400"/>
</dbReference>
<dbReference type="Gramene" id="Os12t0601400-01">
    <property type="protein sequence ID" value="Os12t0601400-01"/>
    <property type="gene ID" value="Os12g0601400"/>
</dbReference>
<dbReference type="KEGG" id="dosa:Os12g0601400"/>
<dbReference type="eggNOG" id="ENOG502QU81">
    <property type="taxonomic scope" value="Eukaryota"/>
</dbReference>
<dbReference type="HOGENOM" id="CLU_049393_0_0_1"/>
<dbReference type="InParanoid" id="P0C133"/>
<dbReference type="OMA" id="PMEANDG"/>
<dbReference type="OrthoDB" id="1926344at2759"/>
<dbReference type="Proteomes" id="UP000000763">
    <property type="component" value="Chromosome 12"/>
</dbReference>
<dbReference type="Proteomes" id="UP000007752">
    <property type="component" value="Chromosome 12"/>
</dbReference>
<dbReference type="Proteomes" id="UP000059680">
    <property type="component" value="Chromosome 12"/>
</dbReference>
<dbReference type="GO" id="GO:0005634">
    <property type="term" value="C:nucleus"/>
    <property type="evidence" value="ECO:0007669"/>
    <property type="project" value="UniProtKB-SubCell"/>
</dbReference>
<dbReference type="GO" id="GO:0009734">
    <property type="term" value="P:auxin-activated signaling pathway"/>
    <property type="evidence" value="ECO:0007669"/>
    <property type="project" value="UniProtKB-KW"/>
</dbReference>
<dbReference type="GO" id="GO:0006355">
    <property type="term" value="P:regulation of DNA-templated transcription"/>
    <property type="evidence" value="ECO:0007669"/>
    <property type="project" value="InterPro"/>
</dbReference>
<dbReference type="FunFam" id="3.10.20.90:FF:000078">
    <property type="entry name" value="Auxin-responsive protein"/>
    <property type="match status" value="1"/>
</dbReference>
<dbReference type="Gene3D" id="3.10.20.90">
    <property type="entry name" value="Phosphatidylinositol 3-kinase Catalytic Subunit, Chain A, domain 1"/>
    <property type="match status" value="1"/>
</dbReference>
<dbReference type="InterPro" id="IPR033389">
    <property type="entry name" value="AUX/IAA_dom"/>
</dbReference>
<dbReference type="InterPro" id="IPR003311">
    <property type="entry name" value="AUX_IAA"/>
</dbReference>
<dbReference type="InterPro" id="IPR053793">
    <property type="entry name" value="PB1-like"/>
</dbReference>
<dbReference type="PANTHER" id="PTHR31734">
    <property type="entry name" value="AUXIN-RESPONSIVE PROTEIN IAA17"/>
    <property type="match status" value="1"/>
</dbReference>
<dbReference type="PANTHER" id="PTHR31734:SF193">
    <property type="entry name" value="AUXIN-RESPONSIVE PROTEIN IAA31"/>
    <property type="match status" value="1"/>
</dbReference>
<dbReference type="Pfam" id="PF02309">
    <property type="entry name" value="AUX_IAA"/>
    <property type="match status" value="1"/>
</dbReference>
<dbReference type="SUPFAM" id="SSF54277">
    <property type="entry name" value="CAD &amp; PB1 domains"/>
    <property type="match status" value="1"/>
</dbReference>
<dbReference type="PROSITE" id="PS51745">
    <property type="entry name" value="PB1"/>
    <property type="match status" value="1"/>
</dbReference>
<reference key="1">
    <citation type="journal article" date="2005" name="BMC Biol.">
        <title>The sequence of rice chromosomes 11 and 12, rich in disease resistance genes and recent gene duplications.</title>
        <authorList>
            <consortium name="The rice chromosomes 11 and 12 sequencing consortia"/>
        </authorList>
    </citation>
    <scope>NUCLEOTIDE SEQUENCE [LARGE SCALE GENOMIC DNA]</scope>
    <source>
        <strain>cv. Nipponbare</strain>
    </source>
</reference>
<reference key="2">
    <citation type="journal article" date="2005" name="Nature">
        <title>The map-based sequence of the rice genome.</title>
        <authorList>
            <consortium name="International rice genome sequencing project (IRGSP)"/>
        </authorList>
    </citation>
    <scope>NUCLEOTIDE SEQUENCE [LARGE SCALE GENOMIC DNA]</scope>
    <source>
        <strain>cv. Nipponbare</strain>
    </source>
</reference>
<reference key="3">
    <citation type="journal article" date="2008" name="Nucleic Acids Res.">
        <title>The rice annotation project database (RAP-DB): 2008 update.</title>
        <authorList>
            <consortium name="The rice annotation project (RAP)"/>
        </authorList>
    </citation>
    <scope>GENOME REANNOTATION</scope>
    <source>
        <strain>cv. Nipponbare</strain>
    </source>
</reference>
<reference key="4">
    <citation type="journal article" date="2013" name="Rice">
        <title>Improvement of the Oryza sativa Nipponbare reference genome using next generation sequence and optical map data.</title>
        <authorList>
            <person name="Kawahara Y."/>
            <person name="de la Bastide M."/>
            <person name="Hamilton J.P."/>
            <person name="Kanamori H."/>
            <person name="McCombie W.R."/>
            <person name="Ouyang S."/>
            <person name="Schwartz D.C."/>
            <person name="Tanaka T."/>
            <person name="Wu J."/>
            <person name="Zhou S."/>
            <person name="Childs K.L."/>
            <person name="Davidson R.M."/>
            <person name="Lin H."/>
            <person name="Quesada-Ocampo L."/>
            <person name="Vaillancourt B."/>
            <person name="Sakai H."/>
            <person name="Lee S.S."/>
            <person name="Kim J."/>
            <person name="Numa H."/>
            <person name="Itoh T."/>
            <person name="Buell C.R."/>
            <person name="Matsumoto T."/>
        </authorList>
    </citation>
    <scope>GENOME REANNOTATION</scope>
    <source>
        <strain>cv. Nipponbare</strain>
    </source>
</reference>
<reference key="5">
    <citation type="journal article" date="2005" name="PLoS Biol.">
        <title>The genomes of Oryza sativa: a history of duplications.</title>
        <authorList>
            <person name="Yu J."/>
            <person name="Wang J."/>
            <person name="Lin W."/>
            <person name="Li S."/>
            <person name="Li H."/>
            <person name="Zhou J."/>
            <person name="Ni P."/>
            <person name="Dong W."/>
            <person name="Hu S."/>
            <person name="Zeng C."/>
            <person name="Zhang J."/>
            <person name="Zhang Y."/>
            <person name="Li R."/>
            <person name="Xu Z."/>
            <person name="Li S."/>
            <person name="Li X."/>
            <person name="Zheng H."/>
            <person name="Cong L."/>
            <person name="Lin L."/>
            <person name="Yin J."/>
            <person name="Geng J."/>
            <person name="Li G."/>
            <person name="Shi J."/>
            <person name="Liu J."/>
            <person name="Lv H."/>
            <person name="Li J."/>
            <person name="Wang J."/>
            <person name="Deng Y."/>
            <person name="Ran L."/>
            <person name="Shi X."/>
            <person name="Wang X."/>
            <person name="Wu Q."/>
            <person name="Li C."/>
            <person name="Ren X."/>
            <person name="Wang J."/>
            <person name="Wang X."/>
            <person name="Li D."/>
            <person name="Liu D."/>
            <person name="Zhang X."/>
            <person name="Ji Z."/>
            <person name="Zhao W."/>
            <person name="Sun Y."/>
            <person name="Zhang Z."/>
            <person name="Bao J."/>
            <person name="Han Y."/>
            <person name="Dong L."/>
            <person name="Ji J."/>
            <person name="Chen P."/>
            <person name="Wu S."/>
            <person name="Liu J."/>
            <person name="Xiao Y."/>
            <person name="Bu D."/>
            <person name="Tan J."/>
            <person name="Yang L."/>
            <person name="Ye C."/>
            <person name="Zhang J."/>
            <person name="Xu J."/>
            <person name="Zhou Y."/>
            <person name="Yu Y."/>
            <person name="Zhang B."/>
            <person name="Zhuang S."/>
            <person name="Wei H."/>
            <person name="Liu B."/>
            <person name="Lei M."/>
            <person name="Yu H."/>
            <person name="Li Y."/>
            <person name="Xu H."/>
            <person name="Wei S."/>
            <person name="He X."/>
            <person name="Fang L."/>
            <person name="Zhang Z."/>
            <person name="Zhang Y."/>
            <person name="Huang X."/>
            <person name="Su Z."/>
            <person name="Tong W."/>
            <person name="Li J."/>
            <person name="Tong Z."/>
            <person name="Li S."/>
            <person name="Ye J."/>
            <person name="Wang L."/>
            <person name="Fang L."/>
            <person name="Lei T."/>
            <person name="Chen C.-S."/>
            <person name="Chen H.-C."/>
            <person name="Xu Z."/>
            <person name="Li H."/>
            <person name="Huang H."/>
            <person name="Zhang F."/>
            <person name="Xu H."/>
            <person name="Li N."/>
            <person name="Zhao C."/>
            <person name="Li S."/>
            <person name="Dong L."/>
            <person name="Huang Y."/>
            <person name="Li L."/>
            <person name="Xi Y."/>
            <person name="Qi Q."/>
            <person name="Li W."/>
            <person name="Zhang B."/>
            <person name="Hu W."/>
            <person name="Zhang Y."/>
            <person name="Tian X."/>
            <person name="Jiao Y."/>
            <person name="Liang X."/>
            <person name="Jin J."/>
            <person name="Gao L."/>
            <person name="Zheng W."/>
            <person name="Hao B."/>
            <person name="Liu S.-M."/>
            <person name="Wang W."/>
            <person name="Yuan L."/>
            <person name="Cao M."/>
            <person name="McDermott J."/>
            <person name="Samudrala R."/>
            <person name="Wang J."/>
            <person name="Wong G.K.-S."/>
            <person name="Yang H."/>
        </authorList>
    </citation>
    <scope>NUCLEOTIDE SEQUENCE [LARGE SCALE GENOMIC DNA]</scope>
    <source>
        <strain>cv. Nipponbare</strain>
    </source>
</reference>
<reference key="6">
    <citation type="journal article" date="2003" name="Science">
        <title>Collection, mapping, and annotation of over 28,000 cDNA clones from japonica rice.</title>
        <authorList>
            <consortium name="The rice full-length cDNA consortium"/>
        </authorList>
    </citation>
    <scope>NUCLEOTIDE SEQUENCE [LARGE SCALE MRNA]</scope>
    <source>
        <strain>cv. Nipponbare</strain>
    </source>
</reference>
<reference key="7">
    <citation type="journal article" date="2006" name="Funct. Integr. Genomics">
        <title>Structure and expression analysis of early auxin-responsive Aux/IAA gene family in rice (Oryza sativa).</title>
        <authorList>
            <person name="Jain M."/>
            <person name="Kaur N."/>
            <person name="Garg R."/>
            <person name="Thakur J.K."/>
            <person name="Tyagi A.K."/>
            <person name="Khurana J.P."/>
        </authorList>
    </citation>
    <scope>TISSUE SPECIFICITY</scope>
    <scope>INDUCTION</scope>
    <scope>NOMENCLATURE</scope>
</reference>
<gene>
    <name type="primary">IAA31</name>
    <name type="ordered locus">Os12g0601400</name>
    <name type="ordered locus">LOC_Os12g40900</name>
    <name type="ORF">OsJ_36766</name>
</gene>